<proteinExistence type="inferred from homology"/>
<sequence length="388" mass="44101">MDEYKIKTVEEGLTKIQFPEFDKISSDAPVFYNPHMELNRDISILALQTFQKQEDRNINICDLFGGSGIRGVRYKNEIDGVGHVFINDISETANEYERHNVELNNLKDIEIFQHDASMFLRMHRGEFDVIDIDPFGTPSPFLDSAGYCSRRNSLLCVTATDTSALCGTYKEPCIRKYNAKPYKSEYCHETGIRILAGFVALTLAKYSKSIEVKLSHSTEHYMRLYIEVKKGSKKSDECLKNIGYLSHCKHCLYREENKGLATSTPDICPECGEKLIQAGPLWLGEIQNEEFISKMIVESENKKLNTKEDVLKLLESCRIEAKSPATFYDVHKICKILKISAPKLDLVFGNLEKEGFEAVKTHFNPLGIKTNAPLKKIKEIIKTLSSSN</sequence>
<dbReference type="EC" id="2.1.1.216" evidence="1"/>
<dbReference type="EMBL" id="CP000678">
    <property type="protein sequence ID" value="ABQ87236.1"/>
    <property type="molecule type" value="Genomic_DNA"/>
</dbReference>
<dbReference type="RefSeq" id="WP_011954246.1">
    <property type="nucleotide sequence ID" value="NZ_CP117965.1"/>
</dbReference>
<dbReference type="SMR" id="A5UM08"/>
<dbReference type="STRING" id="420247.Msm_1031"/>
<dbReference type="EnsemblBacteria" id="ABQ87236">
    <property type="protein sequence ID" value="ABQ87236"/>
    <property type="gene ID" value="Msm_1031"/>
</dbReference>
<dbReference type="KEGG" id="msi:Msm_1031"/>
<dbReference type="PATRIC" id="fig|420247.28.peg.1029"/>
<dbReference type="eggNOG" id="arCOG01219">
    <property type="taxonomic scope" value="Archaea"/>
</dbReference>
<dbReference type="HOGENOM" id="CLU_010862_5_1_2"/>
<dbReference type="Proteomes" id="UP000001992">
    <property type="component" value="Chromosome"/>
</dbReference>
<dbReference type="GO" id="GO:0160104">
    <property type="term" value="F:tRNA (guanine(26)-N2)-dimethyltransferase activity"/>
    <property type="evidence" value="ECO:0007669"/>
    <property type="project" value="UniProtKB-UniRule"/>
</dbReference>
<dbReference type="GO" id="GO:0000049">
    <property type="term" value="F:tRNA binding"/>
    <property type="evidence" value="ECO:0007669"/>
    <property type="project" value="UniProtKB-KW"/>
</dbReference>
<dbReference type="GO" id="GO:0002940">
    <property type="term" value="P:tRNA N2-guanine methylation"/>
    <property type="evidence" value="ECO:0007669"/>
    <property type="project" value="TreeGrafter"/>
</dbReference>
<dbReference type="CDD" id="cd02440">
    <property type="entry name" value="AdoMet_MTases"/>
    <property type="match status" value="1"/>
</dbReference>
<dbReference type="FunFam" id="3.30.56.70:FF:000001">
    <property type="entry name" value="tRNA (guanine(26)-N(2))-dimethyltransferase"/>
    <property type="match status" value="1"/>
</dbReference>
<dbReference type="FunFam" id="3.40.50.150:FF:000272">
    <property type="entry name" value="tRNA (guanine(26)-N(2))-dimethyltransferase"/>
    <property type="match status" value="1"/>
</dbReference>
<dbReference type="Gene3D" id="3.30.56.70">
    <property type="entry name" value="N2,N2-dimethylguanosine tRNA methyltransferase, C-terminal domain"/>
    <property type="match status" value="1"/>
</dbReference>
<dbReference type="Gene3D" id="3.40.50.150">
    <property type="entry name" value="Vaccinia Virus protein VP39"/>
    <property type="match status" value="1"/>
</dbReference>
<dbReference type="HAMAP" id="MF_00290">
    <property type="entry name" value="tRNA_dimethyltr_TRM1"/>
    <property type="match status" value="1"/>
</dbReference>
<dbReference type="InterPro" id="IPR029063">
    <property type="entry name" value="SAM-dependent_MTases_sf"/>
</dbReference>
<dbReference type="InterPro" id="IPR002905">
    <property type="entry name" value="Trm1"/>
</dbReference>
<dbReference type="InterPro" id="IPR022923">
    <property type="entry name" value="TRM1_arc_bac"/>
</dbReference>
<dbReference type="InterPro" id="IPR042296">
    <property type="entry name" value="tRNA_met_Trm1_C"/>
</dbReference>
<dbReference type="NCBIfam" id="TIGR00308">
    <property type="entry name" value="TRM1"/>
    <property type="match status" value="1"/>
</dbReference>
<dbReference type="PANTHER" id="PTHR10631">
    <property type="entry name" value="N 2 ,N 2 -DIMETHYLGUANOSINE TRNA METHYLTRANSFERASE"/>
    <property type="match status" value="1"/>
</dbReference>
<dbReference type="PANTHER" id="PTHR10631:SF3">
    <property type="entry name" value="TRNA (GUANINE(26)-N(2))-DIMETHYLTRANSFERASE"/>
    <property type="match status" value="1"/>
</dbReference>
<dbReference type="Pfam" id="PF02005">
    <property type="entry name" value="TRM"/>
    <property type="match status" value="1"/>
</dbReference>
<dbReference type="SUPFAM" id="SSF53335">
    <property type="entry name" value="S-adenosyl-L-methionine-dependent methyltransferases"/>
    <property type="match status" value="1"/>
</dbReference>
<dbReference type="PROSITE" id="PS51626">
    <property type="entry name" value="SAM_MT_TRM1"/>
    <property type="match status" value="1"/>
</dbReference>
<name>TRM1_METS3</name>
<comment type="function">
    <text evidence="1">Dimethylates a single guanine residue at position 26 of a number of tRNAs using S-adenosyl-L-methionine as donor of the methyl groups.</text>
</comment>
<comment type="catalytic activity">
    <reaction evidence="1">
        <text>guanosine(26) in tRNA + 2 S-adenosyl-L-methionine = N(2)-dimethylguanosine(26) in tRNA + 2 S-adenosyl-L-homocysteine + 2 H(+)</text>
        <dbReference type="Rhea" id="RHEA:43140"/>
        <dbReference type="Rhea" id="RHEA-COMP:10359"/>
        <dbReference type="Rhea" id="RHEA-COMP:10360"/>
        <dbReference type="ChEBI" id="CHEBI:15378"/>
        <dbReference type="ChEBI" id="CHEBI:57856"/>
        <dbReference type="ChEBI" id="CHEBI:59789"/>
        <dbReference type="ChEBI" id="CHEBI:74269"/>
        <dbReference type="ChEBI" id="CHEBI:74513"/>
        <dbReference type="EC" id="2.1.1.216"/>
    </reaction>
</comment>
<comment type="similarity">
    <text evidence="1">Belongs to the class I-like SAM-binding methyltransferase superfamily. Trm1 family.</text>
</comment>
<accession>A5UM08</accession>
<keyword id="KW-0479">Metal-binding</keyword>
<keyword id="KW-0489">Methyltransferase</keyword>
<keyword id="KW-0694">RNA-binding</keyword>
<keyword id="KW-0949">S-adenosyl-L-methionine</keyword>
<keyword id="KW-0808">Transferase</keyword>
<keyword id="KW-0819">tRNA processing</keyword>
<keyword id="KW-0820">tRNA-binding</keyword>
<keyword id="KW-0862">Zinc</keyword>
<reference key="1">
    <citation type="journal article" date="2007" name="Proc. Natl. Acad. Sci. U.S.A.">
        <title>Genomic and metabolic adaptations of Methanobrevibacter smithii to the human gut.</title>
        <authorList>
            <person name="Samuel B.S."/>
            <person name="Hansen E.E."/>
            <person name="Manchester J.K."/>
            <person name="Coutinho P.M."/>
            <person name="Henrissat B."/>
            <person name="Fulton R."/>
            <person name="Latreille P."/>
            <person name="Kim K."/>
            <person name="Wilson R.K."/>
            <person name="Gordon J.I."/>
        </authorList>
    </citation>
    <scope>NUCLEOTIDE SEQUENCE [LARGE SCALE GENOMIC DNA]</scope>
    <source>
        <strain>ATCC 35061 / DSM 861 / OCM 144 / PS</strain>
    </source>
</reference>
<feature type="chain" id="PRO_1000059255" description="tRNA (guanine(26)-N(2))-dimethyltransferase">
    <location>
        <begin position="1"/>
        <end position="388"/>
    </location>
</feature>
<feature type="domain" description="Trm1 methyltransferase" evidence="1">
    <location>
        <begin position="7"/>
        <end position="381"/>
    </location>
</feature>
<feature type="binding site" evidence="1">
    <location>
        <position position="40"/>
    </location>
    <ligand>
        <name>S-adenosyl-L-methionine</name>
        <dbReference type="ChEBI" id="CHEBI:59789"/>
    </ligand>
</feature>
<feature type="binding site" evidence="1">
    <location>
        <position position="70"/>
    </location>
    <ligand>
        <name>S-adenosyl-L-methionine</name>
        <dbReference type="ChEBI" id="CHEBI:59789"/>
    </ligand>
</feature>
<feature type="binding site" evidence="1">
    <location>
        <position position="88"/>
    </location>
    <ligand>
        <name>S-adenosyl-L-methionine</name>
        <dbReference type="ChEBI" id="CHEBI:59789"/>
    </ligand>
</feature>
<feature type="binding site" evidence="1">
    <location>
        <position position="115"/>
    </location>
    <ligand>
        <name>S-adenosyl-L-methionine</name>
        <dbReference type="ChEBI" id="CHEBI:59789"/>
    </ligand>
</feature>
<feature type="binding site" evidence="1">
    <location>
        <position position="116"/>
    </location>
    <ligand>
        <name>S-adenosyl-L-methionine</name>
        <dbReference type="ChEBI" id="CHEBI:59789"/>
    </ligand>
</feature>
<feature type="binding site" evidence="1">
    <location>
        <position position="248"/>
    </location>
    <ligand>
        <name>Zn(2+)</name>
        <dbReference type="ChEBI" id="CHEBI:29105"/>
    </ligand>
</feature>
<feature type="binding site" evidence="1">
    <location>
        <position position="251"/>
    </location>
    <ligand>
        <name>Zn(2+)</name>
        <dbReference type="ChEBI" id="CHEBI:29105"/>
    </ligand>
</feature>
<feature type="binding site" evidence="1">
    <location>
        <position position="268"/>
    </location>
    <ligand>
        <name>Zn(2+)</name>
        <dbReference type="ChEBI" id="CHEBI:29105"/>
    </ligand>
</feature>
<feature type="binding site" evidence="1">
    <location>
        <position position="271"/>
    </location>
    <ligand>
        <name>Zn(2+)</name>
        <dbReference type="ChEBI" id="CHEBI:29105"/>
    </ligand>
</feature>
<organism>
    <name type="scientific">Methanobrevibacter smithii (strain ATCC 35061 / DSM 861 / OCM 144 / PS)</name>
    <dbReference type="NCBI Taxonomy" id="420247"/>
    <lineage>
        <taxon>Archaea</taxon>
        <taxon>Methanobacteriati</taxon>
        <taxon>Methanobacteriota</taxon>
        <taxon>Methanomada group</taxon>
        <taxon>Methanobacteria</taxon>
        <taxon>Methanobacteriales</taxon>
        <taxon>Methanobacteriaceae</taxon>
        <taxon>Methanobrevibacter</taxon>
    </lineage>
</organism>
<gene>
    <name evidence="1" type="primary">trm1</name>
    <name type="ordered locus">Msm_1031</name>
</gene>
<protein>
    <recommendedName>
        <fullName evidence="1">tRNA (guanine(26)-N(2))-dimethyltransferase</fullName>
        <ecNumber evidence="1">2.1.1.216</ecNumber>
    </recommendedName>
    <alternativeName>
        <fullName evidence="1">tRNA 2,2-dimethylguanosine-26 methyltransferase</fullName>
    </alternativeName>
    <alternativeName>
        <fullName evidence="1">tRNA(guanine-26,N(2)-N(2)) methyltransferase</fullName>
    </alternativeName>
    <alternativeName>
        <fullName evidence="1">tRNA(m(2,2)G26)dimethyltransferase</fullName>
    </alternativeName>
</protein>
<evidence type="ECO:0000255" key="1">
    <source>
        <dbReference type="HAMAP-Rule" id="MF_00290"/>
    </source>
</evidence>